<reference key="1">
    <citation type="journal article" date="2011" name="J. Bacteriol.">
        <title>Genome sequence of lineage III Listeria monocytogenes strain HCC23.</title>
        <authorList>
            <person name="Steele C.L."/>
            <person name="Donaldson J.R."/>
            <person name="Paul D."/>
            <person name="Banes M.M."/>
            <person name="Arick T."/>
            <person name="Bridges S.M."/>
            <person name="Lawrence M.L."/>
        </authorList>
    </citation>
    <scope>NUCLEOTIDE SEQUENCE [LARGE SCALE GENOMIC DNA]</scope>
    <source>
        <strain>HCC23</strain>
    </source>
</reference>
<feature type="chain" id="PRO_1000124269" description="Cardiolipin synthase">
    <location>
        <begin position="1"/>
        <end position="482"/>
    </location>
</feature>
<feature type="transmembrane region" description="Helical" evidence="1">
    <location>
        <begin position="4"/>
        <end position="24"/>
    </location>
</feature>
<feature type="transmembrane region" description="Helical" evidence="1">
    <location>
        <begin position="34"/>
        <end position="54"/>
    </location>
</feature>
<feature type="domain" description="PLD phosphodiesterase 1" evidence="1">
    <location>
        <begin position="217"/>
        <end position="244"/>
    </location>
</feature>
<feature type="domain" description="PLD phosphodiesterase 2" evidence="1">
    <location>
        <begin position="395"/>
        <end position="422"/>
    </location>
</feature>
<feature type="active site" evidence="1">
    <location>
        <position position="222"/>
    </location>
</feature>
<feature type="active site" evidence="1">
    <location>
        <position position="224"/>
    </location>
</feature>
<feature type="active site" evidence="1">
    <location>
        <position position="229"/>
    </location>
</feature>
<feature type="active site" evidence="1">
    <location>
        <position position="400"/>
    </location>
</feature>
<feature type="active site" evidence="1">
    <location>
        <position position="402"/>
    </location>
</feature>
<feature type="active site" evidence="1">
    <location>
        <position position="407"/>
    </location>
</feature>
<gene>
    <name type="primary">cls</name>
    <name type="ordered locus">LMHCC_0097</name>
</gene>
<evidence type="ECO:0000255" key="1">
    <source>
        <dbReference type="HAMAP-Rule" id="MF_01916"/>
    </source>
</evidence>
<proteinExistence type="inferred from homology"/>
<protein>
    <recommendedName>
        <fullName evidence="1">Cardiolipin synthase</fullName>
        <shortName evidence="1">CL synthase</shortName>
        <ecNumber evidence="1">2.7.8.-</ecNumber>
    </recommendedName>
</protein>
<dbReference type="EC" id="2.7.8.-" evidence="1"/>
<dbReference type="EMBL" id="CP001175">
    <property type="protein sequence ID" value="ACK38459.1"/>
    <property type="molecule type" value="Genomic_DNA"/>
</dbReference>
<dbReference type="RefSeq" id="WP_003729224.1">
    <property type="nucleotide sequence ID" value="NC_011660.1"/>
</dbReference>
<dbReference type="SMR" id="B8DBK8"/>
<dbReference type="KEGG" id="lmh:LMHCC_0097"/>
<dbReference type="HOGENOM" id="CLU_038053_1_1_9"/>
<dbReference type="GO" id="GO:0005886">
    <property type="term" value="C:plasma membrane"/>
    <property type="evidence" value="ECO:0007669"/>
    <property type="project" value="UniProtKB-SubCell"/>
</dbReference>
<dbReference type="GO" id="GO:0008808">
    <property type="term" value="F:cardiolipin synthase activity"/>
    <property type="evidence" value="ECO:0007669"/>
    <property type="project" value="InterPro"/>
</dbReference>
<dbReference type="GO" id="GO:0032049">
    <property type="term" value="P:cardiolipin biosynthetic process"/>
    <property type="evidence" value="ECO:0007669"/>
    <property type="project" value="InterPro"/>
</dbReference>
<dbReference type="CDD" id="cd09110">
    <property type="entry name" value="PLDc_CLS_1"/>
    <property type="match status" value="1"/>
</dbReference>
<dbReference type="CDD" id="cd09112">
    <property type="entry name" value="PLDc_CLS_2"/>
    <property type="match status" value="1"/>
</dbReference>
<dbReference type="FunFam" id="3.30.870.10:FF:000014">
    <property type="entry name" value="Cardiolipin synthase"/>
    <property type="match status" value="1"/>
</dbReference>
<dbReference type="FunFam" id="3.30.870.10:FF:000021">
    <property type="entry name" value="Cardiolipin synthase"/>
    <property type="match status" value="1"/>
</dbReference>
<dbReference type="Gene3D" id="3.30.870.10">
    <property type="entry name" value="Endonuclease Chain A"/>
    <property type="match status" value="2"/>
</dbReference>
<dbReference type="HAMAP" id="MF_01916">
    <property type="entry name" value="Cardiolipin_synth_Cls"/>
    <property type="match status" value="1"/>
</dbReference>
<dbReference type="InterPro" id="IPR030874">
    <property type="entry name" value="Cardiolipin_synth_Firmi"/>
</dbReference>
<dbReference type="InterPro" id="IPR022924">
    <property type="entry name" value="Cardiolipin_synthase"/>
</dbReference>
<dbReference type="InterPro" id="IPR027379">
    <property type="entry name" value="CLS_N"/>
</dbReference>
<dbReference type="InterPro" id="IPR025202">
    <property type="entry name" value="PLD-like_dom"/>
</dbReference>
<dbReference type="InterPro" id="IPR001736">
    <property type="entry name" value="PLipase_D/transphosphatidylase"/>
</dbReference>
<dbReference type="NCBIfam" id="TIGR04265">
    <property type="entry name" value="bac_cardiolipin"/>
    <property type="match status" value="1"/>
</dbReference>
<dbReference type="PANTHER" id="PTHR21248">
    <property type="entry name" value="CARDIOLIPIN SYNTHASE"/>
    <property type="match status" value="1"/>
</dbReference>
<dbReference type="PANTHER" id="PTHR21248:SF22">
    <property type="entry name" value="PHOSPHOLIPASE D"/>
    <property type="match status" value="1"/>
</dbReference>
<dbReference type="Pfam" id="PF13091">
    <property type="entry name" value="PLDc_2"/>
    <property type="match status" value="2"/>
</dbReference>
<dbReference type="Pfam" id="PF13396">
    <property type="entry name" value="PLDc_N"/>
    <property type="match status" value="1"/>
</dbReference>
<dbReference type="SMART" id="SM00155">
    <property type="entry name" value="PLDc"/>
    <property type="match status" value="2"/>
</dbReference>
<dbReference type="SUPFAM" id="SSF56024">
    <property type="entry name" value="Phospholipase D/nuclease"/>
    <property type="match status" value="2"/>
</dbReference>
<dbReference type="PROSITE" id="PS50035">
    <property type="entry name" value="PLD"/>
    <property type="match status" value="2"/>
</dbReference>
<comment type="function">
    <text evidence="1">Catalyzes the reversible phosphatidyl group transfer from one phosphatidylglycerol molecule to another to form cardiolipin (CL) (diphosphatidylglycerol) and glycerol.</text>
</comment>
<comment type="catalytic activity">
    <reaction evidence="1">
        <text>2 a 1,2-diacyl-sn-glycero-3-phospho-(1'-sn-glycerol) = a cardiolipin + glycerol</text>
        <dbReference type="Rhea" id="RHEA:31451"/>
        <dbReference type="ChEBI" id="CHEBI:17754"/>
        <dbReference type="ChEBI" id="CHEBI:62237"/>
        <dbReference type="ChEBI" id="CHEBI:64716"/>
    </reaction>
</comment>
<comment type="subcellular location">
    <subcellularLocation>
        <location evidence="1">Cell membrane</location>
        <topology evidence="1">Multi-pass membrane protein</topology>
    </subcellularLocation>
</comment>
<comment type="similarity">
    <text evidence="1">Belongs to the phospholipase D family. Cardiolipin synthase subfamily.</text>
</comment>
<accession>B8DBK8</accession>
<organism>
    <name type="scientific">Listeria monocytogenes serotype 4a (strain HCC23)</name>
    <dbReference type="NCBI Taxonomy" id="552536"/>
    <lineage>
        <taxon>Bacteria</taxon>
        <taxon>Bacillati</taxon>
        <taxon>Bacillota</taxon>
        <taxon>Bacilli</taxon>
        <taxon>Bacillales</taxon>
        <taxon>Listeriaceae</taxon>
        <taxon>Listeria</taxon>
    </lineage>
</organism>
<sequence length="482" mass="55348">MGLLAYLLVILLILNVFFAAVTVFLERRDTSATWAWLLVLTFVPIFGFIIYLIFGRKLSGKKIFDWKGQEKIGIQESTANQIEMIRQKEFPFSDPNVKKHRDLIYLLLVNDGAILTQDNEVELFVDGHEKFDALIADIENAKDHIHLIYYIFHSDELGNRLMRVLERKAAEGLNVKIIYDAMGSRTTKKSFFRTFQKNGGLVRPFFPSKLPLINFRLNYRNHRKLAIIDGDVGYIGGFNIGDEYLGASKKFGYWRDTHLRVHGKAVYAMQTRFIMDWNSASSTHKIDYKARYFPTFHGKGHTSMQIVSSGPDSEWQQIKNGYIKMINAAKKTIYLQSPYFIPDASLLEAIKIAALSGVDVRVMIPNKPDHAFVYRATTNYAGELMETGAKIFIYDNGFIHAKTLVVDGEIASVGTANMDFRSFRLNFEVNAFIYEKQMVQKLEDAFLEDILKSYQLTPELYAKRSLWIKFKEAVSRLLSPIL</sequence>
<name>CLS_LISMH</name>
<keyword id="KW-1003">Cell membrane</keyword>
<keyword id="KW-0444">Lipid biosynthesis</keyword>
<keyword id="KW-0443">Lipid metabolism</keyword>
<keyword id="KW-0472">Membrane</keyword>
<keyword id="KW-0594">Phospholipid biosynthesis</keyword>
<keyword id="KW-1208">Phospholipid metabolism</keyword>
<keyword id="KW-0677">Repeat</keyword>
<keyword id="KW-0808">Transferase</keyword>
<keyword id="KW-0812">Transmembrane</keyword>
<keyword id="KW-1133">Transmembrane helix</keyword>